<proteinExistence type="inferred from homology"/>
<gene>
    <name evidence="1" type="primary">treF</name>
    <name type="ordered locus">SeD_A3978</name>
</gene>
<organism>
    <name type="scientific">Salmonella dublin (strain CT_02021853)</name>
    <dbReference type="NCBI Taxonomy" id="439851"/>
    <lineage>
        <taxon>Bacteria</taxon>
        <taxon>Pseudomonadati</taxon>
        <taxon>Pseudomonadota</taxon>
        <taxon>Gammaproteobacteria</taxon>
        <taxon>Enterobacterales</taxon>
        <taxon>Enterobacteriaceae</taxon>
        <taxon>Salmonella</taxon>
    </lineage>
</organism>
<evidence type="ECO:0000255" key="1">
    <source>
        <dbReference type="HAMAP-Rule" id="MF_01059"/>
    </source>
</evidence>
<dbReference type="EC" id="3.2.1.28" evidence="1"/>
<dbReference type="EMBL" id="CP001144">
    <property type="protein sequence ID" value="ACH75320.1"/>
    <property type="molecule type" value="Genomic_DNA"/>
</dbReference>
<dbReference type="RefSeq" id="WP_000934257.1">
    <property type="nucleotide sequence ID" value="NC_011205.1"/>
</dbReference>
<dbReference type="SMR" id="B5FKM4"/>
<dbReference type="CAZy" id="GH37">
    <property type="family name" value="Glycoside Hydrolase Family 37"/>
</dbReference>
<dbReference type="KEGG" id="sed:SeD_A3978"/>
<dbReference type="HOGENOM" id="CLU_006451_3_1_6"/>
<dbReference type="UniPathway" id="UPA00300">
    <property type="reaction ID" value="UER00535"/>
</dbReference>
<dbReference type="Proteomes" id="UP000008322">
    <property type="component" value="Chromosome"/>
</dbReference>
<dbReference type="GO" id="GO:0005737">
    <property type="term" value="C:cytoplasm"/>
    <property type="evidence" value="ECO:0007669"/>
    <property type="project" value="UniProtKB-SubCell"/>
</dbReference>
<dbReference type="GO" id="GO:0004555">
    <property type="term" value="F:alpha,alpha-trehalase activity"/>
    <property type="evidence" value="ECO:0007669"/>
    <property type="project" value="UniProtKB-UniRule"/>
</dbReference>
<dbReference type="GO" id="GO:0071474">
    <property type="term" value="P:cellular hyperosmotic response"/>
    <property type="evidence" value="ECO:0007669"/>
    <property type="project" value="InterPro"/>
</dbReference>
<dbReference type="GO" id="GO:0005993">
    <property type="term" value="P:trehalose catabolic process"/>
    <property type="evidence" value="ECO:0007669"/>
    <property type="project" value="UniProtKB-UniRule"/>
</dbReference>
<dbReference type="FunFam" id="1.50.10.10:FF:000003">
    <property type="entry name" value="Cytoplasmic trehalase"/>
    <property type="match status" value="1"/>
</dbReference>
<dbReference type="Gene3D" id="1.50.10.10">
    <property type="match status" value="1"/>
</dbReference>
<dbReference type="HAMAP" id="MF_01059">
    <property type="entry name" value="Cyt_trehalase"/>
    <property type="match status" value="1"/>
</dbReference>
<dbReference type="InterPro" id="IPR008928">
    <property type="entry name" value="6-hairpin_glycosidase_sf"/>
</dbReference>
<dbReference type="InterPro" id="IPR012341">
    <property type="entry name" value="6hp_glycosidase-like_sf"/>
</dbReference>
<dbReference type="InterPro" id="IPR023715">
    <property type="entry name" value="Cyt_trehalase"/>
</dbReference>
<dbReference type="InterPro" id="IPR001661">
    <property type="entry name" value="Glyco_hydro_37"/>
</dbReference>
<dbReference type="InterPro" id="IPR018232">
    <property type="entry name" value="Glyco_hydro_37_CS"/>
</dbReference>
<dbReference type="NCBIfam" id="NF009773">
    <property type="entry name" value="PRK13270.1"/>
    <property type="match status" value="1"/>
</dbReference>
<dbReference type="NCBIfam" id="NF009774">
    <property type="entry name" value="PRK13271.1"/>
    <property type="match status" value="1"/>
</dbReference>
<dbReference type="PANTHER" id="PTHR23403:SF8">
    <property type="entry name" value="CYTOPLASMIC TREHALASE"/>
    <property type="match status" value="1"/>
</dbReference>
<dbReference type="PANTHER" id="PTHR23403">
    <property type="entry name" value="TREHALASE"/>
    <property type="match status" value="1"/>
</dbReference>
<dbReference type="Pfam" id="PF01204">
    <property type="entry name" value="Trehalase"/>
    <property type="match status" value="1"/>
</dbReference>
<dbReference type="PRINTS" id="PR00744">
    <property type="entry name" value="GLHYDRLASE37"/>
</dbReference>
<dbReference type="SUPFAM" id="SSF48208">
    <property type="entry name" value="Six-hairpin glycosidases"/>
    <property type="match status" value="1"/>
</dbReference>
<dbReference type="PROSITE" id="PS00927">
    <property type="entry name" value="TREHALASE_1"/>
    <property type="match status" value="1"/>
</dbReference>
<dbReference type="PROSITE" id="PS00928">
    <property type="entry name" value="TREHALASE_2"/>
    <property type="match status" value="1"/>
</dbReference>
<protein>
    <recommendedName>
        <fullName evidence="1">Cytoplasmic trehalase</fullName>
        <ecNumber evidence="1">3.2.1.28</ecNumber>
    </recommendedName>
    <alternativeName>
        <fullName evidence="1">Alpha,alpha-trehalase</fullName>
    </alternativeName>
    <alternativeName>
        <fullName evidence="1">Alpha,alpha-trehalose glucohydrolase</fullName>
    </alternativeName>
</protein>
<comment type="function">
    <text evidence="1">Hydrolyzes trehalose to glucose. Could be involved, in cells returning to low osmolarity conditions, in the utilization of the accumulated cytoplasmic trehalose, which was synthesized in response to high osmolarity.</text>
</comment>
<comment type="catalytic activity">
    <reaction evidence="1">
        <text>alpha,alpha-trehalose + H2O = alpha-D-glucose + beta-D-glucose</text>
        <dbReference type="Rhea" id="RHEA:32675"/>
        <dbReference type="ChEBI" id="CHEBI:15377"/>
        <dbReference type="ChEBI" id="CHEBI:15903"/>
        <dbReference type="ChEBI" id="CHEBI:16551"/>
        <dbReference type="ChEBI" id="CHEBI:17925"/>
        <dbReference type="EC" id="3.2.1.28"/>
    </reaction>
</comment>
<comment type="pathway">
    <text evidence="1">Glycan degradation; trehalose degradation; D-glucose from alpha,alpha-trehalose: step 1/1.</text>
</comment>
<comment type="subunit">
    <text evidence="1">Monomer.</text>
</comment>
<comment type="subcellular location">
    <subcellularLocation>
        <location evidence="1">Cytoplasm</location>
    </subcellularLocation>
</comment>
<comment type="similarity">
    <text evidence="1">Belongs to the glycosyl hydrolase 37 family.</text>
</comment>
<accession>B5FKM4</accession>
<keyword id="KW-0963">Cytoplasm</keyword>
<keyword id="KW-0326">Glycosidase</keyword>
<keyword id="KW-0378">Hydrolase</keyword>
<feature type="chain" id="PRO_1000136409" description="Cytoplasmic trehalase">
    <location>
        <begin position="1"/>
        <end position="549"/>
    </location>
</feature>
<feature type="active site" description="Proton donor/acceptor" evidence="1">
    <location>
        <position position="326"/>
    </location>
</feature>
<feature type="active site" description="Proton donor/acceptor" evidence="1">
    <location>
        <position position="509"/>
    </location>
</feature>
<feature type="binding site" evidence="1">
    <location>
        <position position="168"/>
    </location>
    <ligand>
        <name>substrate</name>
    </ligand>
</feature>
<feature type="binding site" evidence="1">
    <location>
        <begin position="175"/>
        <end position="176"/>
    </location>
    <ligand>
        <name>substrate</name>
    </ligand>
</feature>
<feature type="binding site" evidence="1">
    <location>
        <position position="212"/>
    </location>
    <ligand>
        <name>substrate</name>
    </ligand>
</feature>
<feature type="binding site" evidence="1">
    <location>
        <begin position="221"/>
        <end position="223"/>
    </location>
    <ligand>
        <name>substrate</name>
    </ligand>
</feature>
<feature type="binding site" evidence="1">
    <location>
        <begin position="292"/>
        <end position="294"/>
    </location>
    <ligand>
        <name>substrate</name>
    </ligand>
</feature>
<feature type="binding site" evidence="1">
    <location>
        <position position="324"/>
    </location>
    <ligand>
        <name>substrate</name>
    </ligand>
</feature>
<feature type="binding site" evidence="1">
    <location>
        <position position="525"/>
    </location>
    <ligand>
        <name>substrate</name>
    </ligand>
</feature>
<name>TREF_SALDC</name>
<reference key="1">
    <citation type="journal article" date="2011" name="J. Bacteriol.">
        <title>Comparative genomics of 28 Salmonella enterica isolates: evidence for CRISPR-mediated adaptive sublineage evolution.</title>
        <authorList>
            <person name="Fricke W.F."/>
            <person name="Mammel M.K."/>
            <person name="McDermott P.F."/>
            <person name="Tartera C."/>
            <person name="White D.G."/>
            <person name="Leclerc J.E."/>
            <person name="Ravel J."/>
            <person name="Cebula T.A."/>
        </authorList>
    </citation>
    <scope>NUCLEOTIDE SEQUENCE [LARGE SCALE GENOMIC DNA]</scope>
    <source>
        <strain>CT_02021853</strain>
    </source>
</reference>
<sequence length="549" mass="63644">MLNQKLNPTPSEDLTIDVDLLYETDPCELKLDEMIEAEPEPEMIEGLPASDALTPADRYLELFEHVQSTKLFPDSKTFPDCAPKMDPLDILIRYRKVRRHRDFDLRRFVENHFWLPETLSSEYVSNPENSLKEHIDQLWPILTREPQDHIPWSSLLALPQSYIVPGGRFSETYYWDSYFTMLGLAESGREDLLKCMADNFAWMIENYGHIPNGNRTYYLSRSQPPVFALMVELFEEDGVRGARRYLDHLKMEYAFWMDGAESLALNQAYRHVVRMPDGSLLNRYWDDRDTPRDESWLEDVETAKHSGRPPNEVYRDLRAGAASGWDYSSRWLRDAGRLASIRTTQFIPIDLNAFLYKLESAIANISALKGERDTEALFRQKASDRRAAVNHYLWDDENGCYRDYDWRREEMALFSAASIVPLYVGMANHEQADRLANVVRSRLLTPGGIMATEYETGEQWDKPNGWAPLQWMAIQGFKRYGDDMLGDEIAHNWLKTVNHFYQEHHKLIEKYHISGGTPREGGGGEYPLQDGFGWTNGVVRRLIGLYGEP</sequence>